<gene>
    <name evidence="1" type="primary">coaD</name>
    <name type="ordered locus">USA300HOU_1062</name>
</gene>
<sequence length="160" mass="18371">MEHTIAVIPGSFDPITYGHLDIIERSTDRFDEIHVCVLKNSKKEGTFSLEERMDLIEQSVKHLPNVKVHQFSGLLVDYCEQVGAKTIIRGLRAVSDFEYELRLTSMNKKLNNEIETLYMMSSTNYSFISSSIVKEVAAYRADISEFVPPYVEKALKKKFK</sequence>
<feature type="chain" id="PRO_1000076796" description="Phosphopantetheine adenylyltransferase">
    <location>
        <begin position="1"/>
        <end position="160"/>
    </location>
</feature>
<feature type="binding site" evidence="1">
    <location>
        <begin position="11"/>
        <end position="12"/>
    </location>
    <ligand>
        <name>ATP</name>
        <dbReference type="ChEBI" id="CHEBI:30616"/>
    </ligand>
</feature>
<feature type="binding site" evidence="1">
    <location>
        <position position="11"/>
    </location>
    <ligand>
        <name>substrate</name>
    </ligand>
</feature>
<feature type="binding site" evidence="1">
    <location>
        <position position="19"/>
    </location>
    <ligand>
        <name>ATP</name>
        <dbReference type="ChEBI" id="CHEBI:30616"/>
    </ligand>
</feature>
<feature type="binding site" evidence="1">
    <location>
        <position position="43"/>
    </location>
    <ligand>
        <name>substrate</name>
    </ligand>
</feature>
<feature type="binding site" evidence="1">
    <location>
        <position position="75"/>
    </location>
    <ligand>
        <name>substrate</name>
    </ligand>
</feature>
<feature type="binding site" evidence="1">
    <location>
        <position position="89"/>
    </location>
    <ligand>
        <name>substrate</name>
    </ligand>
</feature>
<feature type="binding site" evidence="1">
    <location>
        <begin position="90"/>
        <end position="92"/>
    </location>
    <ligand>
        <name>ATP</name>
        <dbReference type="ChEBI" id="CHEBI:30616"/>
    </ligand>
</feature>
<feature type="binding site" evidence="1">
    <location>
        <position position="100"/>
    </location>
    <ligand>
        <name>ATP</name>
        <dbReference type="ChEBI" id="CHEBI:30616"/>
    </ligand>
</feature>
<feature type="binding site" evidence="1">
    <location>
        <begin position="125"/>
        <end position="131"/>
    </location>
    <ligand>
        <name>ATP</name>
        <dbReference type="ChEBI" id="CHEBI:30616"/>
    </ligand>
</feature>
<feature type="site" description="Transition state stabilizer" evidence="1">
    <location>
        <position position="19"/>
    </location>
</feature>
<keyword id="KW-0067">ATP-binding</keyword>
<keyword id="KW-0173">Coenzyme A biosynthesis</keyword>
<keyword id="KW-0963">Cytoplasm</keyword>
<keyword id="KW-0460">Magnesium</keyword>
<keyword id="KW-0547">Nucleotide-binding</keyword>
<keyword id="KW-0548">Nucleotidyltransferase</keyword>
<keyword id="KW-0808">Transferase</keyword>
<organism>
    <name type="scientific">Staphylococcus aureus (strain USA300 / TCH1516)</name>
    <dbReference type="NCBI Taxonomy" id="451516"/>
    <lineage>
        <taxon>Bacteria</taxon>
        <taxon>Bacillati</taxon>
        <taxon>Bacillota</taxon>
        <taxon>Bacilli</taxon>
        <taxon>Bacillales</taxon>
        <taxon>Staphylococcaceae</taxon>
        <taxon>Staphylococcus</taxon>
    </lineage>
</organism>
<reference key="1">
    <citation type="journal article" date="2007" name="BMC Microbiol.">
        <title>Subtle genetic changes enhance virulence of methicillin resistant and sensitive Staphylococcus aureus.</title>
        <authorList>
            <person name="Highlander S.K."/>
            <person name="Hulten K.G."/>
            <person name="Qin X."/>
            <person name="Jiang H."/>
            <person name="Yerrapragada S."/>
            <person name="Mason E.O. Jr."/>
            <person name="Shang Y."/>
            <person name="Williams T.M."/>
            <person name="Fortunov R.M."/>
            <person name="Liu Y."/>
            <person name="Igboeli O."/>
            <person name="Petrosino J."/>
            <person name="Tirumalai M."/>
            <person name="Uzman A."/>
            <person name="Fox G.E."/>
            <person name="Cardenas A.M."/>
            <person name="Muzny D.M."/>
            <person name="Hemphill L."/>
            <person name="Ding Y."/>
            <person name="Dugan S."/>
            <person name="Blyth P.R."/>
            <person name="Buhay C.J."/>
            <person name="Dinh H.H."/>
            <person name="Hawes A.C."/>
            <person name="Holder M."/>
            <person name="Kovar C.L."/>
            <person name="Lee S.L."/>
            <person name="Liu W."/>
            <person name="Nazareth L.V."/>
            <person name="Wang Q."/>
            <person name="Zhou J."/>
            <person name="Kaplan S.L."/>
            <person name="Weinstock G.M."/>
        </authorList>
    </citation>
    <scope>NUCLEOTIDE SEQUENCE [LARGE SCALE GENOMIC DNA]</scope>
    <source>
        <strain>USA300 / TCH1516</strain>
    </source>
</reference>
<protein>
    <recommendedName>
        <fullName evidence="1">Phosphopantetheine adenylyltransferase</fullName>
        <ecNumber evidence="1">2.7.7.3</ecNumber>
    </recommendedName>
    <alternativeName>
        <fullName evidence="1">Dephospho-CoA pyrophosphorylase</fullName>
    </alternativeName>
    <alternativeName>
        <fullName evidence="1">Pantetheine-phosphate adenylyltransferase</fullName>
        <shortName evidence="1">PPAT</shortName>
    </alternativeName>
</protein>
<name>COAD_STAAT</name>
<comment type="function">
    <text evidence="1">Reversibly transfers an adenylyl group from ATP to 4'-phosphopantetheine, yielding dephospho-CoA (dPCoA) and pyrophosphate.</text>
</comment>
<comment type="catalytic activity">
    <reaction evidence="1">
        <text>(R)-4'-phosphopantetheine + ATP + H(+) = 3'-dephospho-CoA + diphosphate</text>
        <dbReference type="Rhea" id="RHEA:19801"/>
        <dbReference type="ChEBI" id="CHEBI:15378"/>
        <dbReference type="ChEBI" id="CHEBI:30616"/>
        <dbReference type="ChEBI" id="CHEBI:33019"/>
        <dbReference type="ChEBI" id="CHEBI:57328"/>
        <dbReference type="ChEBI" id="CHEBI:61723"/>
        <dbReference type="EC" id="2.7.7.3"/>
    </reaction>
</comment>
<comment type="cofactor">
    <cofactor evidence="1">
        <name>Mg(2+)</name>
        <dbReference type="ChEBI" id="CHEBI:18420"/>
    </cofactor>
</comment>
<comment type="pathway">
    <text evidence="1">Cofactor biosynthesis; coenzyme A biosynthesis; CoA from (R)-pantothenate: step 4/5.</text>
</comment>
<comment type="subunit">
    <text evidence="1">Homohexamer.</text>
</comment>
<comment type="subcellular location">
    <subcellularLocation>
        <location evidence="1">Cytoplasm</location>
    </subcellularLocation>
</comment>
<comment type="similarity">
    <text evidence="1">Belongs to the bacterial CoaD family.</text>
</comment>
<dbReference type="EC" id="2.7.7.3" evidence="1"/>
<dbReference type="EMBL" id="CP000730">
    <property type="protein sequence ID" value="ABX29081.1"/>
    <property type="molecule type" value="Genomic_DNA"/>
</dbReference>
<dbReference type="RefSeq" id="WP_000401377.1">
    <property type="nucleotide sequence ID" value="NC_010079.1"/>
</dbReference>
<dbReference type="SMR" id="A8Z1Q8"/>
<dbReference type="GeneID" id="98345441"/>
<dbReference type="KEGG" id="sax:USA300HOU_1062"/>
<dbReference type="HOGENOM" id="CLU_100149_0_1_9"/>
<dbReference type="UniPathway" id="UPA00241">
    <property type="reaction ID" value="UER00355"/>
</dbReference>
<dbReference type="GO" id="GO:0005737">
    <property type="term" value="C:cytoplasm"/>
    <property type="evidence" value="ECO:0007669"/>
    <property type="project" value="UniProtKB-SubCell"/>
</dbReference>
<dbReference type="GO" id="GO:0005524">
    <property type="term" value="F:ATP binding"/>
    <property type="evidence" value="ECO:0007669"/>
    <property type="project" value="UniProtKB-KW"/>
</dbReference>
<dbReference type="GO" id="GO:0004595">
    <property type="term" value="F:pantetheine-phosphate adenylyltransferase activity"/>
    <property type="evidence" value="ECO:0007669"/>
    <property type="project" value="UniProtKB-UniRule"/>
</dbReference>
<dbReference type="GO" id="GO:0015937">
    <property type="term" value="P:coenzyme A biosynthetic process"/>
    <property type="evidence" value="ECO:0007669"/>
    <property type="project" value="UniProtKB-UniRule"/>
</dbReference>
<dbReference type="CDD" id="cd02163">
    <property type="entry name" value="PPAT"/>
    <property type="match status" value="1"/>
</dbReference>
<dbReference type="Gene3D" id="3.40.50.620">
    <property type="entry name" value="HUPs"/>
    <property type="match status" value="1"/>
</dbReference>
<dbReference type="HAMAP" id="MF_00151">
    <property type="entry name" value="PPAT_bact"/>
    <property type="match status" value="1"/>
</dbReference>
<dbReference type="InterPro" id="IPR004821">
    <property type="entry name" value="Cyt_trans-like"/>
</dbReference>
<dbReference type="InterPro" id="IPR001980">
    <property type="entry name" value="PPAT"/>
</dbReference>
<dbReference type="InterPro" id="IPR014729">
    <property type="entry name" value="Rossmann-like_a/b/a_fold"/>
</dbReference>
<dbReference type="NCBIfam" id="TIGR01510">
    <property type="entry name" value="coaD_prev_kdtB"/>
    <property type="match status" value="1"/>
</dbReference>
<dbReference type="NCBIfam" id="TIGR00125">
    <property type="entry name" value="cyt_tran_rel"/>
    <property type="match status" value="1"/>
</dbReference>
<dbReference type="PANTHER" id="PTHR21342">
    <property type="entry name" value="PHOSPHOPANTETHEINE ADENYLYLTRANSFERASE"/>
    <property type="match status" value="1"/>
</dbReference>
<dbReference type="PANTHER" id="PTHR21342:SF1">
    <property type="entry name" value="PHOSPHOPANTETHEINE ADENYLYLTRANSFERASE"/>
    <property type="match status" value="1"/>
</dbReference>
<dbReference type="Pfam" id="PF01467">
    <property type="entry name" value="CTP_transf_like"/>
    <property type="match status" value="1"/>
</dbReference>
<dbReference type="PRINTS" id="PR01020">
    <property type="entry name" value="LPSBIOSNTHSS"/>
</dbReference>
<dbReference type="SUPFAM" id="SSF52374">
    <property type="entry name" value="Nucleotidylyl transferase"/>
    <property type="match status" value="1"/>
</dbReference>
<proteinExistence type="inferred from homology"/>
<accession>A8Z1Q8</accession>
<evidence type="ECO:0000255" key="1">
    <source>
        <dbReference type="HAMAP-Rule" id="MF_00151"/>
    </source>
</evidence>